<accession>B2KG20</accession>
<accession>Q5DT35</accession>
<gene>
    <name evidence="9" type="primary">Klri1</name>
</gene>
<evidence type="ECO:0000250" key="1">
    <source>
        <dbReference type="UniProtKB" id="P27812"/>
    </source>
</evidence>
<evidence type="ECO:0000250" key="2">
    <source>
        <dbReference type="UniProtKB" id="Q13241"/>
    </source>
</evidence>
<evidence type="ECO:0000250" key="3">
    <source>
        <dbReference type="UniProtKB" id="Q5DT39"/>
    </source>
</evidence>
<evidence type="ECO:0000255" key="4"/>
<evidence type="ECO:0000255" key="5">
    <source>
        <dbReference type="PROSITE-ProRule" id="PRU00040"/>
    </source>
</evidence>
<evidence type="ECO:0000255" key="6">
    <source>
        <dbReference type="PROSITE-ProRule" id="PRU00498"/>
    </source>
</evidence>
<evidence type="ECO:0000269" key="7">
    <source>
    </source>
</evidence>
<evidence type="ECO:0000269" key="8">
    <source>
    </source>
</evidence>
<evidence type="ECO:0000303" key="9">
    <source>
    </source>
</evidence>
<evidence type="ECO:0000305" key="10"/>
<evidence type="ECO:0000312" key="11">
    <source>
        <dbReference type="EMBL" id="AAR00559.1"/>
    </source>
</evidence>
<evidence type="ECO:0000312" key="12">
    <source>
        <dbReference type="Proteomes" id="UP000000589"/>
    </source>
</evidence>
<feature type="chain" id="PRO_0000442199" description="Killer cell lectin-like receptor subfamily I member 1">
    <location>
        <begin position="1"/>
        <end position="248"/>
    </location>
</feature>
<feature type="topological domain" description="Cytoplasmic" evidence="10">
    <location>
        <begin position="1"/>
        <end position="80"/>
    </location>
</feature>
<feature type="transmembrane region" description="Helical; Signal-anchor for type II membrane protein" evidence="4">
    <location>
        <begin position="81"/>
        <end position="101"/>
    </location>
</feature>
<feature type="topological domain" description="Extracellular" evidence="10">
    <location>
        <begin position="102"/>
        <end position="248"/>
    </location>
</feature>
<feature type="domain" description="C-type lectin" evidence="5">
    <location>
        <begin position="139"/>
        <end position="245"/>
    </location>
</feature>
<feature type="short sequence motif" description="ITIM motif 1" evidence="1">
    <location>
        <begin position="16"/>
        <end position="21"/>
    </location>
</feature>
<feature type="short sequence motif" description="ITIM motif 2" evidence="1">
    <location>
        <begin position="47"/>
        <end position="52"/>
    </location>
</feature>
<feature type="glycosylation site" description="N-linked (GlcNAc...) asparagine" evidence="6">
    <location>
        <position position="197"/>
    </location>
</feature>
<feature type="glycosylation site" description="N-linked (GlcNAc...) asparagine" evidence="6">
    <location>
        <position position="214"/>
    </location>
</feature>
<feature type="glycosylation site" description="N-linked (GlcNAc...) asparagine" evidence="6">
    <location>
        <position position="220"/>
    </location>
</feature>
<feature type="disulfide bond" evidence="2">
    <location>
        <begin position="132"/>
        <end position="145"/>
    </location>
</feature>
<feature type="disulfide bond" evidence="2">
    <location>
        <begin position="161"/>
        <end position="244"/>
    </location>
</feature>
<feature type="disulfide bond" evidence="2">
    <location>
        <begin position="223"/>
        <end position="236"/>
    </location>
</feature>
<feature type="sequence conflict" description="In Ref. 1; AAR00559." evidence="10" ref="1">
    <original>Q</original>
    <variation>H</variation>
    <location>
        <position position="72"/>
    </location>
</feature>
<name>KLRI1_MOUSE</name>
<sequence length="248" mass="28642">MLHSKRREYTANNQDVTYTELKTCKSPWKHRIPTVKQSPVVLCEEQLKYGELTFHRTPQPQPRKQAMGRKRQGPKSTVWRVVTGMLGALCVVLMTTTGILLPKLFSSQEEQCRKTSLHPLRCPKDDASCDLCSSDWIAFGNNFYCVFKENTKTWAESQSACEELNSHLVIIDSKAEVENLLLFEMDGWILHKMDGTNSSWLWRNDIKIQNTLTNDSEKKNHSCHYLRGNLFMPDECSAKKSYICEFNI</sequence>
<reference evidence="11" key="1">
    <citation type="journal article" date="2005" name="Immunogenetics">
        <title>Molecular cloning of KLRI1 and KLRI2, a novel pair of lectin-like natural killer-cell receptors with opposing signalling motifs.</title>
        <authorList>
            <person name="Saether P.C."/>
            <person name="Westgaard I.H."/>
            <person name="Flornes L.M."/>
            <person name="Hoelsbrekken S.E."/>
            <person name="Ryan J.C."/>
            <person name="Fossum S."/>
            <person name="Dissen E."/>
        </authorList>
    </citation>
    <scope>NUCLEOTIDE SEQUENCE [MRNA]</scope>
    <scope>TISSUE SPECIFICITY</scope>
    <source>
        <strain evidence="11">C57BL/6J</strain>
    </source>
</reference>
<reference evidence="12" key="2">
    <citation type="journal article" date="2009" name="PLoS Biol.">
        <title>Lineage-specific biology revealed by a finished genome assembly of the mouse.</title>
        <authorList>
            <person name="Church D.M."/>
            <person name="Goodstadt L."/>
            <person name="Hillier L.W."/>
            <person name="Zody M.C."/>
            <person name="Goldstein S."/>
            <person name="She X."/>
            <person name="Bult C.J."/>
            <person name="Agarwala R."/>
            <person name="Cherry J.L."/>
            <person name="DiCuccio M."/>
            <person name="Hlavina W."/>
            <person name="Kapustin Y."/>
            <person name="Meric P."/>
            <person name="Maglott D."/>
            <person name="Birtle Z."/>
            <person name="Marques A.C."/>
            <person name="Graves T."/>
            <person name="Zhou S."/>
            <person name="Teague B."/>
            <person name="Potamousis K."/>
            <person name="Churas C."/>
            <person name="Place M."/>
            <person name="Herschleb J."/>
            <person name="Runnheim R."/>
            <person name="Forrest D."/>
            <person name="Amos-Landgraf J."/>
            <person name="Schwartz D.C."/>
            <person name="Cheng Z."/>
            <person name="Lindblad-Toh K."/>
            <person name="Eichler E.E."/>
            <person name="Ponting C.P."/>
        </authorList>
    </citation>
    <scope>NUCLEOTIDE SEQUENCE [LARGE SCALE GENOMIC DNA]</scope>
    <source>
        <strain>C57BL/6J</strain>
    </source>
</reference>
<reference evidence="10" key="3">
    <citation type="journal article" date="2008" name="J. Immunol.">
        <title>KLRE/I1 and KLRE/I2: a novel pair of heterodimeric receptors that inversely regulate NK cell cytotoxicity.</title>
        <authorList>
            <person name="Saether P.C."/>
            <person name="Westgaard I.H."/>
            <person name="Hoelsbrekken S.E."/>
            <person name="Benjamin J."/>
            <person name="Lanier L.L."/>
            <person name="Fossum S."/>
            <person name="Dissen E."/>
        </authorList>
    </citation>
    <scope>FUNCTION</scope>
    <scope>SUBCELLULAR LOCATION</scope>
</reference>
<keyword id="KW-1003">Cell membrane</keyword>
<keyword id="KW-1015">Disulfide bond</keyword>
<keyword id="KW-0325">Glycoprotein</keyword>
<keyword id="KW-0430">Lectin</keyword>
<keyword id="KW-0472">Membrane</keyword>
<keyword id="KW-1185">Reference proteome</keyword>
<keyword id="KW-0735">Signal-anchor</keyword>
<keyword id="KW-0812">Transmembrane</keyword>
<keyword id="KW-1133">Transmembrane helix</keyword>
<organism evidence="12">
    <name type="scientific">Mus musculus</name>
    <name type="common">Mouse</name>
    <dbReference type="NCBI Taxonomy" id="10090"/>
    <lineage>
        <taxon>Eukaryota</taxon>
        <taxon>Metazoa</taxon>
        <taxon>Chordata</taxon>
        <taxon>Craniata</taxon>
        <taxon>Vertebrata</taxon>
        <taxon>Euteleostomi</taxon>
        <taxon>Mammalia</taxon>
        <taxon>Eutheria</taxon>
        <taxon>Euarchontoglires</taxon>
        <taxon>Glires</taxon>
        <taxon>Rodentia</taxon>
        <taxon>Myomorpha</taxon>
        <taxon>Muroidea</taxon>
        <taxon>Muridae</taxon>
        <taxon>Murinae</taxon>
        <taxon>Mus</taxon>
        <taxon>Mus</taxon>
    </lineage>
</organism>
<protein>
    <recommendedName>
        <fullName evidence="9">Killer cell lectin-like receptor subfamily I member 1</fullName>
    </recommendedName>
</protein>
<comment type="function">
    <text evidence="8">Lectin-like receptor for natural killer (NK) cells. Heterodimer formation with KLRE1 mediates inhibition of NK cell cytolytic activity.</text>
</comment>
<comment type="subunit">
    <text evidence="3">Heterodimer with KLRE1. Interacts with PTPN6.</text>
</comment>
<comment type="subcellular location">
    <subcellularLocation>
        <location evidence="8">Cell membrane</location>
        <topology evidence="4">Single-pass type II membrane protein</topology>
    </subcellularLocation>
</comment>
<comment type="tissue specificity">
    <text evidence="7">Expressed in natural killer (NK) cells.</text>
</comment>
<comment type="domain">
    <text evidence="1">Contains 2 copies of a cytoplasmic motif that is referred to as the immunoreceptor tyrosine-based inhibitor motif (ITIM). The phosphorylated ITIM motif can bind the SH2 domain of several SH2-containing phosphatases leading to down-regulation of cell activation.</text>
</comment>
<proteinExistence type="evidence at transcript level"/>
<dbReference type="EMBL" id="AY324874">
    <property type="protein sequence ID" value="AAR00559.1"/>
    <property type="molecule type" value="mRNA"/>
</dbReference>
<dbReference type="EMBL" id="AC171002">
    <property type="status" value="NOT_ANNOTATED_CDS"/>
    <property type="molecule type" value="Genomic_DNA"/>
</dbReference>
<dbReference type="CCDS" id="CCDS20593.1"/>
<dbReference type="RefSeq" id="NP_001012538.2">
    <property type="nucleotide sequence ID" value="NM_001012520.3"/>
</dbReference>
<dbReference type="SMR" id="B2KG20"/>
<dbReference type="FunCoup" id="B2KG20">
    <property type="interactions" value="50"/>
</dbReference>
<dbReference type="STRING" id="10090.ENSMUSP00000085362"/>
<dbReference type="GlyCosmos" id="B2KG20">
    <property type="glycosylation" value="3 sites, No reported glycans"/>
</dbReference>
<dbReference type="GlyGen" id="B2KG20">
    <property type="glycosylation" value="3 sites"/>
</dbReference>
<dbReference type="PaxDb" id="10090-ENSMUSP00000085362"/>
<dbReference type="Ensembl" id="ENSMUST00000088046.2">
    <property type="protein sequence ID" value="ENSMUSP00000085362.2"/>
    <property type="gene ID" value="ENSMUSG00000067610.2"/>
</dbReference>
<dbReference type="GeneID" id="503550"/>
<dbReference type="KEGG" id="mmu:503550"/>
<dbReference type="UCSC" id="uc009egq.1">
    <property type="organism name" value="mouse"/>
</dbReference>
<dbReference type="AGR" id="MGI:3530275"/>
<dbReference type="CTD" id="503550"/>
<dbReference type="MGI" id="MGI:3530275">
    <property type="gene designation" value="Klri1"/>
</dbReference>
<dbReference type="VEuPathDB" id="HostDB:ENSMUSG00000067610"/>
<dbReference type="eggNOG" id="KOG4297">
    <property type="taxonomic scope" value="Eukaryota"/>
</dbReference>
<dbReference type="GeneTree" id="ENSGT00940000164228"/>
<dbReference type="HOGENOM" id="CLU_049894_9_2_1"/>
<dbReference type="InParanoid" id="B2KG20"/>
<dbReference type="OMA" id="RSTKWQV"/>
<dbReference type="OrthoDB" id="7357196at2759"/>
<dbReference type="PhylomeDB" id="B2KG20"/>
<dbReference type="TreeFam" id="TF336674"/>
<dbReference type="BioGRID-ORCS" id="503550">
    <property type="hits" value="4 hits in 77 CRISPR screens"/>
</dbReference>
<dbReference type="PRO" id="PR:B2KG20"/>
<dbReference type="Proteomes" id="UP000000589">
    <property type="component" value="Chromosome 6"/>
</dbReference>
<dbReference type="RNAct" id="B2KG20">
    <property type="molecule type" value="protein"/>
</dbReference>
<dbReference type="Bgee" id="ENSMUSG00000067610">
    <property type="expression patterns" value="Expressed in spleen and 18 other cell types or tissues"/>
</dbReference>
<dbReference type="GO" id="GO:0005886">
    <property type="term" value="C:plasma membrane"/>
    <property type="evidence" value="ECO:0000266"/>
    <property type="project" value="MGI"/>
</dbReference>
<dbReference type="GO" id="GO:0030246">
    <property type="term" value="F:carbohydrate binding"/>
    <property type="evidence" value="ECO:0007669"/>
    <property type="project" value="UniProtKB-KW"/>
</dbReference>
<dbReference type="CDD" id="cd03593">
    <property type="entry name" value="CLECT_NK_receptors_like"/>
    <property type="match status" value="1"/>
</dbReference>
<dbReference type="FunFam" id="3.10.100.10:FF:000175">
    <property type="entry name" value="Killer cell lectin-like receptor subfamily I member 1"/>
    <property type="match status" value="1"/>
</dbReference>
<dbReference type="Gene3D" id="3.10.100.10">
    <property type="entry name" value="Mannose-Binding Protein A, subunit A"/>
    <property type="match status" value="1"/>
</dbReference>
<dbReference type="InterPro" id="IPR001304">
    <property type="entry name" value="C-type_lectin-like"/>
</dbReference>
<dbReference type="InterPro" id="IPR016186">
    <property type="entry name" value="C-type_lectin-like/link_sf"/>
</dbReference>
<dbReference type="InterPro" id="IPR016187">
    <property type="entry name" value="CTDL_fold"/>
</dbReference>
<dbReference type="InterPro" id="IPR050919">
    <property type="entry name" value="NKG2/CD94_NK_receptors"/>
</dbReference>
<dbReference type="InterPro" id="IPR033992">
    <property type="entry name" value="NKR-like_CTLD"/>
</dbReference>
<dbReference type="PANTHER" id="PTHR22800">
    <property type="entry name" value="C-TYPE LECTIN PROTEINS"/>
    <property type="match status" value="1"/>
</dbReference>
<dbReference type="PANTHER" id="PTHR22800:SF250">
    <property type="entry name" value="KILLER CELL LECTIN-LIKE RECEPTOR SUBFAMILY I MEMBER 1"/>
    <property type="match status" value="1"/>
</dbReference>
<dbReference type="Pfam" id="PF00059">
    <property type="entry name" value="Lectin_C"/>
    <property type="match status" value="1"/>
</dbReference>
<dbReference type="SMART" id="SM00034">
    <property type="entry name" value="CLECT"/>
    <property type="match status" value="1"/>
</dbReference>
<dbReference type="SUPFAM" id="SSF56436">
    <property type="entry name" value="C-type lectin-like"/>
    <property type="match status" value="1"/>
</dbReference>
<dbReference type="PROSITE" id="PS50041">
    <property type="entry name" value="C_TYPE_LECTIN_2"/>
    <property type="match status" value="1"/>
</dbReference>